<name>AKTP2_DROME</name>
<accession>A1ZBR5</accession>
<accession>Q8T8U2</accession>
<evidence type="ECO:0000255" key="1">
    <source>
        <dbReference type="PROSITE-ProRule" id="PRU00388"/>
    </source>
</evidence>
<evidence type="ECO:0000256" key="2">
    <source>
        <dbReference type="SAM" id="MobiDB-lite"/>
    </source>
</evidence>
<evidence type="ECO:0000305" key="3"/>
<sequence>MWYSTVRNPSIALIKQGYHILAEYNLVKEELKNIYAIPSYACGLHWFGVIFVHSGIYAGSVFRFSILLPENFPADISLPTVVFSTEVLHPHICPQNKTLDLAHFLNEWRKDEHHIWHVLRYIQAIFADPEGSICTGQSSSGDLVIMDEVRNMNALNMLAKSRPEYIKRVQEQAILSRNLIYDRPPTEDPHYIIVEPYCAERHLKFMDQLKSPCWKEATSMDCSQPSEYLGHIDSSRQLDEEEANQVEKLHRGRIPEHQREESEVSL</sequence>
<keyword id="KW-1185">Reference proteome</keyword>
<comment type="similarity">
    <text evidence="1">Belongs to the ubiquitin-conjugating enzyme family. FTS subfamily.</text>
</comment>
<comment type="caution">
    <text evidence="3">Lacks the conserved Cys residue necessary for ubiquitin-conjugating enzyme E2 activity.</text>
</comment>
<protein>
    <recommendedName>
        <fullName>Protein crossbronx-like</fullName>
    </recommendedName>
</protein>
<reference key="1">
    <citation type="journal article" date="2000" name="Science">
        <title>The genome sequence of Drosophila melanogaster.</title>
        <authorList>
            <person name="Adams M.D."/>
            <person name="Celniker S.E."/>
            <person name="Holt R.A."/>
            <person name="Evans C.A."/>
            <person name="Gocayne J.D."/>
            <person name="Amanatides P.G."/>
            <person name="Scherer S.E."/>
            <person name="Li P.W."/>
            <person name="Hoskins R.A."/>
            <person name="Galle R.F."/>
            <person name="George R.A."/>
            <person name="Lewis S.E."/>
            <person name="Richards S."/>
            <person name="Ashburner M."/>
            <person name="Henderson S.N."/>
            <person name="Sutton G.G."/>
            <person name="Wortman J.R."/>
            <person name="Yandell M.D."/>
            <person name="Zhang Q."/>
            <person name="Chen L.X."/>
            <person name="Brandon R.C."/>
            <person name="Rogers Y.-H.C."/>
            <person name="Blazej R.G."/>
            <person name="Champe M."/>
            <person name="Pfeiffer B.D."/>
            <person name="Wan K.H."/>
            <person name="Doyle C."/>
            <person name="Baxter E.G."/>
            <person name="Helt G."/>
            <person name="Nelson C.R."/>
            <person name="Miklos G.L.G."/>
            <person name="Abril J.F."/>
            <person name="Agbayani A."/>
            <person name="An H.-J."/>
            <person name="Andrews-Pfannkoch C."/>
            <person name="Baldwin D."/>
            <person name="Ballew R.M."/>
            <person name="Basu A."/>
            <person name="Baxendale J."/>
            <person name="Bayraktaroglu L."/>
            <person name="Beasley E.M."/>
            <person name="Beeson K.Y."/>
            <person name="Benos P.V."/>
            <person name="Berman B.P."/>
            <person name="Bhandari D."/>
            <person name="Bolshakov S."/>
            <person name="Borkova D."/>
            <person name="Botchan M.R."/>
            <person name="Bouck J."/>
            <person name="Brokstein P."/>
            <person name="Brottier P."/>
            <person name="Burtis K.C."/>
            <person name="Busam D.A."/>
            <person name="Butler H."/>
            <person name="Cadieu E."/>
            <person name="Center A."/>
            <person name="Chandra I."/>
            <person name="Cherry J.M."/>
            <person name="Cawley S."/>
            <person name="Dahlke C."/>
            <person name="Davenport L.B."/>
            <person name="Davies P."/>
            <person name="de Pablos B."/>
            <person name="Delcher A."/>
            <person name="Deng Z."/>
            <person name="Mays A.D."/>
            <person name="Dew I."/>
            <person name="Dietz S.M."/>
            <person name="Dodson K."/>
            <person name="Doup L.E."/>
            <person name="Downes M."/>
            <person name="Dugan-Rocha S."/>
            <person name="Dunkov B.C."/>
            <person name="Dunn P."/>
            <person name="Durbin K.J."/>
            <person name="Evangelista C.C."/>
            <person name="Ferraz C."/>
            <person name="Ferriera S."/>
            <person name="Fleischmann W."/>
            <person name="Fosler C."/>
            <person name="Gabrielian A.E."/>
            <person name="Garg N.S."/>
            <person name="Gelbart W.M."/>
            <person name="Glasser K."/>
            <person name="Glodek A."/>
            <person name="Gong F."/>
            <person name="Gorrell J.H."/>
            <person name="Gu Z."/>
            <person name="Guan P."/>
            <person name="Harris M."/>
            <person name="Harris N.L."/>
            <person name="Harvey D.A."/>
            <person name="Heiman T.J."/>
            <person name="Hernandez J.R."/>
            <person name="Houck J."/>
            <person name="Hostin D."/>
            <person name="Houston K.A."/>
            <person name="Howland T.J."/>
            <person name="Wei M.-H."/>
            <person name="Ibegwam C."/>
            <person name="Jalali M."/>
            <person name="Kalush F."/>
            <person name="Karpen G.H."/>
            <person name="Ke Z."/>
            <person name="Kennison J.A."/>
            <person name="Ketchum K.A."/>
            <person name="Kimmel B.E."/>
            <person name="Kodira C.D."/>
            <person name="Kraft C.L."/>
            <person name="Kravitz S."/>
            <person name="Kulp D."/>
            <person name="Lai Z."/>
            <person name="Lasko P."/>
            <person name="Lei Y."/>
            <person name="Levitsky A.A."/>
            <person name="Li J.H."/>
            <person name="Li Z."/>
            <person name="Liang Y."/>
            <person name="Lin X."/>
            <person name="Liu X."/>
            <person name="Mattei B."/>
            <person name="McIntosh T.C."/>
            <person name="McLeod M.P."/>
            <person name="McPherson D."/>
            <person name="Merkulov G."/>
            <person name="Milshina N.V."/>
            <person name="Mobarry C."/>
            <person name="Morris J."/>
            <person name="Moshrefi A."/>
            <person name="Mount S.M."/>
            <person name="Moy M."/>
            <person name="Murphy B."/>
            <person name="Murphy L."/>
            <person name="Muzny D.M."/>
            <person name="Nelson D.L."/>
            <person name="Nelson D.R."/>
            <person name="Nelson K.A."/>
            <person name="Nixon K."/>
            <person name="Nusskern D.R."/>
            <person name="Pacleb J.M."/>
            <person name="Palazzolo M."/>
            <person name="Pittman G.S."/>
            <person name="Pan S."/>
            <person name="Pollard J."/>
            <person name="Puri V."/>
            <person name="Reese M.G."/>
            <person name="Reinert K."/>
            <person name="Remington K."/>
            <person name="Saunders R.D.C."/>
            <person name="Scheeler F."/>
            <person name="Shen H."/>
            <person name="Shue B.C."/>
            <person name="Siden-Kiamos I."/>
            <person name="Simpson M."/>
            <person name="Skupski M.P."/>
            <person name="Smith T.J."/>
            <person name="Spier E."/>
            <person name="Spradling A.C."/>
            <person name="Stapleton M."/>
            <person name="Strong R."/>
            <person name="Sun E."/>
            <person name="Svirskas R."/>
            <person name="Tector C."/>
            <person name="Turner R."/>
            <person name="Venter E."/>
            <person name="Wang A.H."/>
            <person name="Wang X."/>
            <person name="Wang Z.-Y."/>
            <person name="Wassarman D.A."/>
            <person name="Weinstock G.M."/>
            <person name="Weissenbach J."/>
            <person name="Williams S.M."/>
            <person name="Woodage T."/>
            <person name="Worley K.C."/>
            <person name="Wu D."/>
            <person name="Yang S."/>
            <person name="Yao Q.A."/>
            <person name="Ye J."/>
            <person name="Yeh R.-F."/>
            <person name="Zaveri J.S."/>
            <person name="Zhan M."/>
            <person name="Zhang G."/>
            <person name="Zhao Q."/>
            <person name="Zheng L."/>
            <person name="Zheng X.H."/>
            <person name="Zhong F.N."/>
            <person name="Zhong W."/>
            <person name="Zhou X."/>
            <person name="Zhu S.C."/>
            <person name="Zhu X."/>
            <person name="Smith H.O."/>
            <person name="Gibbs R.A."/>
            <person name="Myers E.W."/>
            <person name="Rubin G.M."/>
            <person name="Venter J.C."/>
        </authorList>
    </citation>
    <scope>NUCLEOTIDE SEQUENCE [LARGE SCALE GENOMIC DNA]</scope>
    <source>
        <strain>Berkeley</strain>
    </source>
</reference>
<reference key="2">
    <citation type="journal article" date="2002" name="Genome Biol.">
        <title>Annotation of the Drosophila melanogaster euchromatic genome: a systematic review.</title>
        <authorList>
            <person name="Misra S."/>
            <person name="Crosby M.A."/>
            <person name="Mungall C.J."/>
            <person name="Matthews B.B."/>
            <person name="Campbell K.S."/>
            <person name="Hradecky P."/>
            <person name="Huang Y."/>
            <person name="Kaminker J.S."/>
            <person name="Millburn G.H."/>
            <person name="Prochnik S.E."/>
            <person name="Smith C.D."/>
            <person name="Tupy J.L."/>
            <person name="Whitfield E.J."/>
            <person name="Bayraktaroglu L."/>
            <person name="Berman B.P."/>
            <person name="Bettencourt B.R."/>
            <person name="Celniker S.E."/>
            <person name="de Grey A.D.N.J."/>
            <person name="Drysdale R.A."/>
            <person name="Harris N.L."/>
            <person name="Richter J."/>
            <person name="Russo S."/>
            <person name="Schroeder A.J."/>
            <person name="Shu S.Q."/>
            <person name="Stapleton M."/>
            <person name="Yamada C."/>
            <person name="Ashburner M."/>
            <person name="Gelbart W.M."/>
            <person name="Rubin G.M."/>
            <person name="Lewis S.E."/>
        </authorList>
    </citation>
    <scope>GENOME REANNOTATION</scope>
    <source>
        <strain>Berkeley</strain>
    </source>
</reference>
<reference key="3">
    <citation type="journal article" date="2002" name="Genome Biol.">
        <title>A Drosophila full-length cDNA resource.</title>
        <authorList>
            <person name="Stapleton M."/>
            <person name="Carlson J.W."/>
            <person name="Brokstein P."/>
            <person name="Yu C."/>
            <person name="Champe M."/>
            <person name="George R.A."/>
            <person name="Guarin H."/>
            <person name="Kronmiller B."/>
            <person name="Pacleb J.M."/>
            <person name="Park S."/>
            <person name="Wan K.H."/>
            <person name="Rubin G.M."/>
            <person name="Celniker S.E."/>
        </authorList>
    </citation>
    <scope>NUCLEOTIDE SEQUENCE [LARGE SCALE MRNA]</scope>
    <source>
        <strain>Berkeley</strain>
        <tissue>Testis</tissue>
    </source>
</reference>
<dbReference type="EMBL" id="AE013599">
    <property type="protein sequence ID" value="AAF57506.1"/>
    <property type="molecule type" value="Genomic_DNA"/>
</dbReference>
<dbReference type="EMBL" id="AY075274">
    <property type="protein sequence ID" value="AAL68141.1"/>
    <property type="molecule type" value="mRNA"/>
</dbReference>
<dbReference type="RefSeq" id="NP_611455.1">
    <property type="nucleotide sequence ID" value="NM_137611.2"/>
</dbReference>
<dbReference type="SMR" id="A1ZBR5"/>
<dbReference type="BioGRID" id="62936">
    <property type="interactions" value="9"/>
</dbReference>
<dbReference type="FunCoup" id="A1ZBR5">
    <property type="interactions" value="70"/>
</dbReference>
<dbReference type="IntAct" id="A1ZBR5">
    <property type="interactions" value="5"/>
</dbReference>
<dbReference type="STRING" id="7227.FBpp0085632"/>
<dbReference type="PaxDb" id="7227-FBpp0085632"/>
<dbReference type="DNASU" id="37280"/>
<dbReference type="EnsemblMetazoa" id="FBtr0086324">
    <property type="protein sequence ID" value="FBpp0085632"/>
    <property type="gene ID" value="FBgn0034483"/>
</dbReference>
<dbReference type="GeneID" id="37280"/>
<dbReference type="KEGG" id="dme:Dmel_CG16894"/>
<dbReference type="UCSC" id="CG16894-RA">
    <property type="organism name" value="d. melanogaster"/>
</dbReference>
<dbReference type="AGR" id="FB:FBgn0034483"/>
<dbReference type="FlyBase" id="FBgn0034483">
    <property type="gene designation" value="CG16894"/>
</dbReference>
<dbReference type="VEuPathDB" id="VectorBase:FBgn0034483"/>
<dbReference type="eggNOG" id="KOG0429">
    <property type="taxonomic scope" value="Eukaryota"/>
</dbReference>
<dbReference type="HOGENOM" id="CLU_083049_2_0_1"/>
<dbReference type="InParanoid" id="A1ZBR5"/>
<dbReference type="OMA" id="DQHHIWH"/>
<dbReference type="OrthoDB" id="5596422at2759"/>
<dbReference type="PhylomeDB" id="A1ZBR5"/>
<dbReference type="BioGRID-ORCS" id="37280">
    <property type="hits" value="0 hits in 1 CRISPR screen"/>
</dbReference>
<dbReference type="GenomeRNAi" id="37280"/>
<dbReference type="PRO" id="PR:A1ZBR5"/>
<dbReference type="Proteomes" id="UP000000803">
    <property type="component" value="Chromosome 2R"/>
</dbReference>
<dbReference type="Bgee" id="FBgn0034483">
    <property type="expression patterns" value="Expressed in mid-late elongation-stage spermatid (Drosophila) in testis and 22 other cell types or tissues"/>
</dbReference>
<dbReference type="ExpressionAtlas" id="A1ZBR5">
    <property type="expression patterns" value="baseline and differential"/>
</dbReference>
<dbReference type="CDD" id="cd23814">
    <property type="entry name" value="UEV_AKTIP"/>
    <property type="match status" value="1"/>
</dbReference>
<dbReference type="Gene3D" id="3.10.110.10">
    <property type="entry name" value="Ubiquitin Conjugating Enzyme"/>
    <property type="match status" value="1"/>
</dbReference>
<dbReference type="InterPro" id="IPR000608">
    <property type="entry name" value="UBQ-conjugat_E2_core"/>
</dbReference>
<dbReference type="InterPro" id="IPR016135">
    <property type="entry name" value="UBQ-conjugating_enzyme/RWD"/>
</dbReference>
<dbReference type="Pfam" id="PF00179">
    <property type="entry name" value="UQ_con"/>
    <property type="match status" value="1"/>
</dbReference>
<dbReference type="SMART" id="SM00212">
    <property type="entry name" value="UBCc"/>
    <property type="match status" value="1"/>
</dbReference>
<dbReference type="SUPFAM" id="SSF54495">
    <property type="entry name" value="UBC-like"/>
    <property type="match status" value="1"/>
</dbReference>
<dbReference type="PROSITE" id="PS50127">
    <property type="entry name" value="UBC_2"/>
    <property type="match status" value="1"/>
</dbReference>
<proteinExistence type="evidence at transcript level"/>
<organism>
    <name type="scientific">Drosophila melanogaster</name>
    <name type="common">Fruit fly</name>
    <dbReference type="NCBI Taxonomy" id="7227"/>
    <lineage>
        <taxon>Eukaryota</taxon>
        <taxon>Metazoa</taxon>
        <taxon>Ecdysozoa</taxon>
        <taxon>Arthropoda</taxon>
        <taxon>Hexapoda</taxon>
        <taxon>Insecta</taxon>
        <taxon>Pterygota</taxon>
        <taxon>Neoptera</taxon>
        <taxon>Endopterygota</taxon>
        <taxon>Diptera</taxon>
        <taxon>Brachycera</taxon>
        <taxon>Muscomorpha</taxon>
        <taxon>Ephydroidea</taxon>
        <taxon>Drosophilidae</taxon>
        <taxon>Drosophila</taxon>
        <taxon>Sophophora</taxon>
    </lineage>
</organism>
<feature type="chain" id="PRO_0000379044" description="Protein crossbronx-like">
    <location>
        <begin position="1"/>
        <end position="266"/>
    </location>
</feature>
<feature type="domain" description="UBC core" evidence="1">
    <location>
        <begin position="15"/>
        <end position="178"/>
    </location>
</feature>
<feature type="region of interest" description="Disordered" evidence="2">
    <location>
        <begin position="234"/>
        <end position="266"/>
    </location>
</feature>
<feature type="compositionally biased region" description="Basic and acidic residues" evidence="2">
    <location>
        <begin position="245"/>
        <end position="266"/>
    </location>
</feature>
<feature type="sequence conflict" description="In Ref. 3; AAL68141." evidence="3" ref="3">
    <original>E</original>
    <variation>D</variation>
    <location>
        <position position="29"/>
    </location>
</feature>
<feature type="sequence conflict" description="In Ref. 3; AAL68141." evidence="3" ref="3">
    <original>E</original>
    <variation>D</variation>
    <location>
        <position position="70"/>
    </location>
</feature>
<feature type="sequence conflict" description="In Ref. 3; AAL68141." evidence="3" ref="3">
    <original>N</original>
    <variation>D</variation>
    <location>
        <position position="153"/>
    </location>
</feature>
<feature type="sequence conflict" description="In Ref. 3; AAL68141." evidence="3" ref="3">
    <original>N</original>
    <variation>K</variation>
    <location>
        <position position="178"/>
    </location>
</feature>
<gene>
    <name type="ORF">CG16894</name>
</gene>